<accession>Q5F938</accession>
<organism>
    <name type="scientific">Neisseria gonorrhoeae (strain ATCC 700825 / FA 1090)</name>
    <dbReference type="NCBI Taxonomy" id="242231"/>
    <lineage>
        <taxon>Bacteria</taxon>
        <taxon>Pseudomonadati</taxon>
        <taxon>Pseudomonadota</taxon>
        <taxon>Betaproteobacteria</taxon>
        <taxon>Neisseriales</taxon>
        <taxon>Neisseriaceae</taxon>
        <taxon>Neisseria</taxon>
    </lineage>
</organism>
<keyword id="KW-0030">Aminoacyl-tRNA synthetase</keyword>
<keyword id="KW-0067">ATP-binding</keyword>
<keyword id="KW-0963">Cytoplasm</keyword>
<keyword id="KW-0436">Ligase</keyword>
<keyword id="KW-0547">Nucleotide-binding</keyword>
<keyword id="KW-0648">Protein biosynthesis</keyword>
<keyword id="KW-1185">Reference proteome</keyword>
<feature type="chain" id="PRO_0000248726" description="Proline--tRNA ligase">
    <location>
        <begin position="1"/>
        <end position="570"/>
    </location>
</feature>
<evidence type="ECO:0000255" key="1">
    <source>
        <dbReference type="HAMAP-Rule" id="MF_01569"/>
    </source>
</evidence>
<reference key="1">
    <citation type="submission" date="2003-03" db="EMBL/GenBank/DDBJ databases">
        <title>The complete genome sequence of Neisseria gonorrhoeae.</title>
        <authorList>
            <person name="Lewis L.A."/>
            <person name="Gillaspy A.F."/>
            <person name="McLaughlin R.E."/>
            <person name="Gipson M."/>
            <person name="Ducey T.F."/>
            <person name="Ownbey T."/>
            <person name="Hartman K."/>
            <person name="Nydick C."/>
            <person name="Carson M.B."/>
            <person name="Vaughn J."/>
            <person name="Thomson C."/>
            <person name="Song L."/>
            <person name="Lin S."/>
            <person name="Yuan X."/>
            <person name="Najar F."/>
            <person name="Zhan M."/>
            <person name="Ren Q."/>
            <person name="Zhu H."/>
            <person name="Qi S."/>
            <person name="Kenton S.M."/>
            <person name="Lai H."/>
            <person name="White J.D."/>
            <person name="Clifton S."/>
            <person name="Roe B.A."/>
            <person name="Dyer D.W."/>
        </authorList>
    </citation>
    <scope>NUCLEOTIDE SEQUENCE [LARGE SCALE GENOMIC DNA]</scope>
    <source>
        <strain>ATCC 700825 / FA 1090</strain>
    </source>
</reference>
<sequence>MKASQFFISTLKEAPAEAAFASHKLMIRAGLIKANASGLYTWMPMGLRVLRKVENVVREEMARAGSVELLMPVVQPAELWQESGRWEFYGKELLRLKDRHERDFCMGPTCEEVIADIVRKEINSYKQLPKNFYHIQTKFRDEVRPRFGVMRAREFVMKDAYSFHADYASLQATYDAMYDAHCRIFTRLGLAFRPVAADTGSIGGTGSHEFQVLAESGEDVIAYSDTSDYAANIELAPTLPLKGERAAAQAVLTKVHTPNVKTIESLVEFLNIPVEQTLKSIVVEGENEGELVLLLLRGDHEFNDIKAEKLAGVKSPLTMASPAAIVEQFGANGGSLGPVGFTGKVYADFATEKGADWVIGANEDDYHYTGFNFGRDAAEPEFVDLRNVVEGDESPDGQGRLKLARGIEVGHVFQLRGKYTQAMNVSFLDNNGKSQIMEMGCYGIGITRVVAAAIEQNNDEKGIIWTKAMAPFEVVIVPMNYKKSDTVREAADRIYAELLAAGADVLLDDRDERAGVLLNDSELLGIPHRIVIGDRALKEGNVEYAERRGNEAQAVAIGEIVARVTASLNA</sequence>
<comment type="function">
    <text evidence="1">Catalyzes the attachment of proline to tRNA(Pro) in a two-step reaction: proline is first activated by ATP to form Pro-AMP and then transferred to the acceptor end of tRNA(Pro). As ProRS can inadvertently accommodate and process non-cognate amino acids such as alanine and cysteine, to avoid such errors it has two additional distinct editing activities against alanine. One activity is designated as 'pretransfer' editing and involves the tRNA(Pro)-independent hydrolysis of activated Ala-AMP. The other activity is designated 'posttransfer' editing and involves deacylation of mischarged Ala-tRNA(Pro). The misacylated Cys-tRNA(Pro) is not edited by ProRS.</text>
</comment>
<comment type="catalytic activity">
    <reaction evidence="1">
        <text>tRNA(Pro) + L-proline + ATP = L-prolyl-tRNA(Pro) + AMP + diphosphate</text>
        <dbReference type="Rhea" id="RHEA:14305"/>
        <dbReference type="Rhea" id="RHEA-COMP:9700"/>
        <dbReference type="Rhea" id="RHEA-COMP:9702"/>
        <dbReference type="ChEBI" id="CHEBI:30616"/>
        <dbReference type="ChEBI" id="CHEBI:33019"/>
        <dbReference type="ChEBI" id="CHEBI:60039"/>
        <dbReference type="ChEBI" id="CHEBI:78442"/>
        <dbReference type="ChEBI" id="CHEBI:78532"/>
        <dbReference type="ChEBI" id="CHEBI:456215"/>
        <dbReference type="EC" id="6.1.1.15"/>
    </reaction>
</comment>
<comment type="subunit">
    <text evidence="1">Homodimer.</text>
</comment>
<comment type="subcellular location">
    <subcellularLocation>
        <location evidence="1">Cytoplasm</location>
    </subcellularLocation>
</comment>
<comment type="domain">
    <text evidence="1">Consists of three domains: the N-terminal catalytic domain, the editing domain and the C-terminal anticodon-binding domain.</text>
</comment>
<comment type="similarity">
    <text evidence="1">Belongs to the class-II aminoacyl-tRNA synthetase family. ProS type 1 subfamily.</text>
</comment>
<dbReference type="EC" id="6.1.1.15" evidence="1"/>
<dbReference type="EMBL" id="AE004969">
    <property type="protein sequence ID" value="AAW89299.1"/>
    <property type="molecule type" value="Genomic_DNA"/>
</dbReference>
<dbReference type="RefSeq" id="WP_010951084.1">
    <property type="nucleotide sequence ID" value="NC_002946.2"/>
</dbReference>
<dbReference type="RefSeq" id="YP_207711.1">
    <property type="nucleotide sequence ID" value="NC_002946.2"/>
</dbReference>
<dbReference type="SMR" id="Q5F938"/>
<dbReference type="STRING" id="242231.NGO_0566"/>
<dbReference type="KEGG" id="ngo:NGO_0566"/>
<dbReference type="PATRIC" id="fig|242231.10.peg.669"/>
<dbReference type="HOGENOM" id="CLU_016739_0_0_4"/>
<dbReference type="Proteomes" id="UP000000535">
    <property type="component" value="Chromosome"/>
</dbReference>
<dbReference type="GO" id="GO:0005829">
    <property type="term" value="C:cytosol"/>
    <property type="evidence" value="ECO:0007669"/>
    <property type="project" value="TreeGrafter"/>
</dbReference>
<dbReference type="GO" id="GO:0002161">
    <property type="term" value="F:aminoacyl-tRNA deacylase activity"/>
    <property type="evidence" value="ECO:0007669"/>
    <property type="project" value="InterPro"/>
</dbReference>
<dbReference type="GO" id="GO:0005524">
    <property type="term" value="F:ATP binding"/>
    <property type="evidence" value="ECO:0007669"/>
    <property type="project" value="UniProtKB-UniRule"/>
</dbReference>
<dbReference type="GO" id="GO:0004827">
    <property type="term" value="F:proline-tRNA ligase activity"/>
    <property type="evidence" value="ECO:0007669"/>
    <property type="project" value="UniProtKB-UniRule"/>
</dbReference>
<dbReference type="GO" id="GO:0006433">
    <property type="term" value="P:prolyl-tRNA aminoacylation"/>
    <property type="evidence" value="ECO:0007669"/>
    <property type="project" value="UniProtKB-UniRule"/>
</dbReference>
<dbReference type="CDD" id="cd04334">
    <property type="entry name" value="ProRS-INS"/>
    <property type="match status" value="1"/>
</dbReference>
<dbReference type="CDD" id="cd00861">
    <property type="entry name" value="ProRS_anticodon_short"/>
    <property type="match status" value="1"/>
</dbReference>
<dbReference type="CDD" id="cd00779">
    <property type="entry name" value="ProRS_core_prok"/>
    <property type="match status" value="1"/>
</dbReference>
<dbReference type="FunFam" id="3.30.930.10:FF:000043">
    <property type="entry name" value="Proline--tRNA ligase"/>
    <property type="match status" value="1"/>
</dbReference>
<dbReference type="FunFam" id="3.30.930.10:FF:000097">
    <property type="entry name" value="Proline--tRNA ligase"/>
    <property type="match status" value="1"/>
</dbReference>
<dbReference type="Gene3D" id="3.40.50.800">
    <property type="entry name" value="Anticodon-binding domain"/>
    <property type="match status" value="1"/>
</dbReference>
<dbReference type="Gene3D" id="3.30.930.10">
    <property type="entry name" value="Bira Bifunctional Protein, Domain 2"/>
    <property type="match status" value="2"/>
</dbReference>
<dbReference type="Gene3D" id="3.90.960.10">
    <property type="entry name" value="YbaK/aminoacyl-tRNA synthetase-associated domain"/>
    <property type="match status" value="1"/>
</dbReference>
<dbReference type="HAMAP" id="MF_01569">
    <property type="entry name" value="Pro_tRNA_synth_type1"/>
    <property type="match status" value="1"/>
</dbReference>
<dbReference type="InterPro" id="IPR002314">
    <property type="entry name" value="aa-tRNA-synt_IIb"/>
</dbReference>
<dbReference type="InterPro" id="IPR006195">
    <property type="entry name" value="aa-tRNA-synth_II"/>
</dbReference>
<dbReference type="InterPro" id="IPR045864">
    <property type="entry name" value="aa-tRNA-synth_II/BPL/LPL"/>
</dbReference>
<dbReference type="InterPro" id="IPR004154">
    <property type="entry name" value="Anticodon-bd"/>
</dbReference>
<dbReference type="InterPro" id="IPR036621">
    <property type="entry name" value="Anticodon-bd_dom_sf"/>
</dbReference>
<dbReference type="InterPro" id="IPR002316">
    <property type="entry name" value="Pro-tRNA-ligase_IIa"/>
</dbReference>
<dbReference type="InterPro" id="IPR004500">
    <property type="entry name" value="Pro-tRNA-synth_IIa_bac-type"/>
</dbReference>
<dbReference type="InterPro" id="IPR023717">
    <property type="entry name" value="Pro-tRNA-Synthase_IIa_type1"/>
</dbReference>
<dbReference type="InterPro" id="IPR050062">
    <property type="entry name" value="Pro-tRNA_synthetase"/>
</dbReference>
<dbReference type="InterPro" id="IPR044140">
    <property type="entry name" value="ProRS_anticodon_short"/>
</dbReference>
<dbReference type="InterPro" id="IPR033730">
    <property type="entry name" value="ProRS_core_prok"/>
</dbReference>
<dbReference type="InterPro" id="IPR036754">
    <property type="entry name" value="YbaK/aa-tRNA-synt-asso_dom_sf"/>
</dbReference>
<dbReference type="InterPro" id="IPR007214">
    <property type="entry name" value="YbaK/aa-tRNA-synth-assoc-dom"/>
</dbReference>
<dbReference type="NCBIfam" id="NF006625">
    <property type="entry name" value="PRK09194.1"/>
    <property type="match status" value="1"/>
</dbReference>
<dbReference type="NCBIfam" id="TIGR00409">
    <property type="entry name" value="proS_fam_II"/>
    <property type="match status" value="1"/>
</dbReference>
<dbReference type="PANTHER" id="PTHR42753">
    <property type="entry name" value="MITOCHONDRIAL RIBOSOME PROTEIN L39/PROLYL-TRNA LIGASE FAMILY MEMBER"/>
    <property type="match status" value="1"/>
</dbReference>
<dbReference type="PANTHER" id="PTHR42753:SF2">
    <property type="entry name" value="PROLINE--TRNA LIGASE"/>
    <property type="match status" value="1"/>
</dbReference>
<dbReference type="Pfam" id="PF03129">
    <property type="entry name" value="HGTP_anticodon"/>
    <property type="match status" value="1"/>
</dbReference>
<dbReference type="Pfam" id="PF00587">
    <property type="entry name" value="tRNA-synt_2b"/>
    <property type="match status" value="1"/>
</dbReference>
<dbReference type="Pfam" id="PF04073">
    <property type="entry name" value="tRNA_edit"/>
    <property type="match status" value="1"/>
</dbReference>
<dbReference type="PIRSF" id="PIRSF001535">
    <property type="entry name" value="ProRS_1"/>
    <property type="match status" value="1"/>
</dbReference>
<dbReference type="PRINTS" id="PR01046">
    <property type="entry name" value="TRNASYNTHPRO"/>
</dbReference>
<dbReference type="SUPFAM" id="SSF52954">
    <property type="entry name" value="Class II aaRS ABD-related"/>
    <property type="match status" value="1"/>
</dbReference>
<dbReference type="SUPFAM" id="SSF55681">
    <property type="entry name" value="Class II aaRS and biotin synthetases"/>
    <property type="match status" value="1"/>
</dbReference>
<dbReference type="SUPFAM" id="SSF55826">
    <property type="entry name" value="YbaK/ProRS associated domain"/>
    <property type="match status" value="1"/>
</dbReference>
<dbReference type="PROSITE" id="PS50862">
    <property type="entry name" value="AA_TRNA_LIGASE_II"/>
    <property type="match status" value="1"/>
</dbReference>
<gene>
    <name evidence="1" type="primary">proS</name>
    <name type="ordered locus">NGO_0566</name>
</gene>
<protein>
    <recommendedName>
        <fullName evidence="1">Proline--tRNA ligase</fullName>
        <ecNumber evidence="1">6.1.1.15</ecNumber>
    </recommendedName>
    <alternativeName>
        <fullName evidence="1">Prolyl-tRNA synthetase</fullName>
        <shortName evidence="1">ProRS</shortName>
    </alternativeName>
</protein>
<name>SYP_NEIG1</name>
<proteinExistence type="inferred from homology"/>